<dbReference type="EMBL" id="BA000030">
    <property type="protein sequence ID" value="BAC71012.1"/>
    <property type="molecule type" value="Genomic_DNA"/>
</dbReference>
<dbReference type="RefSeq" id="WP_010984731.1">
    <property type="nucleotide sequence ID" value="NZ_JZJK01000090.1"/>
</dbReference>
<dbReference type="SMR" id="Q82I57"/>
<dbReference type="GeneID" id="41540376"/>
<dbReference type="KEGG" id="sma:SAVERM_3301"/>
<dbReference type="eggNOG" id="COG0782">
    <property type="taxonomic scope" value="Bacteria"/>
</dbReference>
<dbReference type="HOGENOM" id="CLU_101379_0_0_11"/>
<dbReference type="OrthoDB" id="9797227at2"/>
<dbReference type="Proteomes" id="UP000000428">
    <property type="component" value="Chromosome"/>
</dbReference>
<dbReference type="GO" id="GO:0003677">
    <property type="term" value="F:DNA binding"/>
    <property type="evidence" value="ECO:0007669"/>
    <property type="project" value="UniProtKB-UniRule"/>
</dbReference>
<dbReference type="GO" id="GO:0070063">
    <property type="term" value="F:RNA polymerase binding"/>
    <property type="evidence" value="ECO:0007669"/>
    <property type="project" value="InterPro"/>
</dbReference>
<dbReference type="GO" id="GO:0006354">
    <property type="term" value="P:DNA-templated transcription elongation"/>
    <property type="evidence" value="ECO:0007669"/>
    <property type="project" value="TreeGrafter"/>
</dbReference>
<dbReference type="GO" id="GO:0032784">
    <property type="term" value="P:regulation of DNA-templated transcription elongation"/>
    <property type="evidence" value="ECO:0007669"/>
    <property type="project" value="UniProtKB-UniRule"/>
</dbReference>
<dbReference type="FunFam" id="1.10.287.180:FF:000001">
    <property type="entry name" value="Transcription elongation factor GreA"/>
    <property type="match status" value="1"/>
</dbReference>
<dbReference type="Gene3D" id="3.10.50.30">
    <property type="entry name" value="Transcription elongation factor, GreA/GreB, C-terminal domain"/>
    <property type="match status" value="1"/>
</dbReference>
<dbReference type="Gene3D" id="1.10.287.180">
    <property type="entry name" value="Transcription elongation factor, GreA/GreB, N-terminal domain"/>
    <property type="match status" value="1"/>
</dbReference>
<dbReference type="HAMAP" id="MF_00105">
    <property type="entry name" value="GreA_GreB"/>
    <property type="match status" value="1"/>
</dbReference>
<dbReference type="InterPro" id="IPR036953">
    <property type="entry name" value="GreA/GreB_C_sf"/>
</dbReference>
<dbReference type="InterPro" id="IPR018151">
    <property type="entry name" value="TF_GreA/GreB_CS"/>
</dbReference>
<dbReference type="InterPro" id="IPR006359">
    <property type="entry name" value="Tscrpt_elong_fac_GreA"/>
</dbReference>
<dbReference type="InterPro" id="IPR028624">
    <property type="entry name" value="Tscrpt_elong_fac_GreA/B"/>
</dbReference>
<dbReference type="InterPro" id="IPR001437">
    <property type="entry name" value="Tscrpt_elong_fac_GreA/B_C"/>
</dbReference>
<dbReference type="InterPro" id="IPR023459">
    <property type="entry name" value="Tscrpt_elong_fac_GreA/B_fam"/>
</dbReference>
<dbReference type="InterPro" id="IPR022691">
    <property type="entry name" value="Tscrpt_elong_fac_GreA/B_N"/>
</dbReference>
<dbReference type="InterPro" id="IPR036805">
    <property type="entry name" value="Tscrpt_elong_fac_GreA/B_N_sf"/>
</dbReference>
<dbReference type="NCBIfam" id="TIGR01462">
    <property type="entry name" value="greA"/>
    <property type="match status" value="1"/>
</dbReference>
<dbReference type="NCBIfam" id="NF001262">
    <property type="entry name" value="PRK00226.1-3"/>
    <property type="match status" value="1"/>
</dbReference>
<dbReference type="PANTHER" id="PTHR30437">
    <property type="entry name" value="TRANSCRIPTION ELONGATION FACTOR GREA"/>
    <property type="match status" value="1"/>
</dbReference>
<dbReference type="PANTHER" id="PTHR30437:SF4">
    <property type="entry name" value="TRANSCRIPTION ELONGATION FACTOR GREA"/>
    <property type="match status" value="1"/>
</dbReference>
<dbReference type="Pfam" id="PF01272">
    <property type="entry name" value="GreA_GreB"/>
    <property type="match status" value="1"/>
</dbReference>
<dbReference type="Pfam" id="PF03449">
    <property type="entry name" value="GreA_GreB_N"/>
    <property type="match status" value="1"/>
</dbReference>
<dbReference type="PIRSF" id="PIRSF006092">
    <property type="entry name" value="GreA_GreB"/>
    <property type="match status" value="1"/>
</dbReference>
<dbReference type="SUPFAM" id="SSF54534">
    <property type="entry name" value="FKBP-like"/>
    <property type="match status" value="1"/>
</dbReference>
<dbReference type="SUPFAM" id="SSF46557">
    <property type="entry name" value="GreA transcript cleavage protein, N-terminal domain"/>
    <property type="match status" value="1"/>
</dbReference>
<dbReference type="PROSITE" id="PS00829">
    <property type="entry name" value="GREAB_1"/>
    <property type="match status" value="1"/>
</dbReference>
<name>GREA_STRAW</name>
<feature type="chain" id="PRO_1000034306" description="Transcription elongation factor GreA">
    <location>
        <begin position="1"/>
        <end position="165"/>
    </location>
</feature>
<feature type="coiled-coil region" evidence="1">
    <location>
        <begin position="55"/>
        <end position="78"/>
    </location>
</feature>
<proteinExistence type="inferred from homology"/>
<keyword id="KW-0175">Coiled coil</keyword>
<keyword id="KW-0238">DNA-binding</keyword>
<keyword id="KW-1185">Reference proteome</keyword>
<keyword id="KW-0804">Transcription</keyword>
<keyword id="KW-0805">Transcription regulation</keyword>
<organism>
    <name type="scientific">Streptomyces avermitilis (strain ATCC 31267 / DSM 46492 / JCM 5070 / NBRC 14893 / NCIMB 12804 / NRRL 8165 / MA-4680)</name>
    <dbReference type="NCBI Taxonomy" id="227882"/>
    <lineage>
        <taxon>Bacteria</taxon>
        <taxon>Bacillati</taxon>
        <taxon>Actinomycetota</taxon>
        <taxon>Actinomycetes</taxon>
        <taxon>Kitasatosporales</taxon>
        <taxon>Streptomycetaceae</taxon>
        <taxon>Streptomyces</taxon>
    </lineage>
</organism>
<sequence>MTQTSENVTWLTQEAYNQLKAELEYLSGPARTEIAAKIAAAREEGDLRENGGYHAAKEEQGKQELRVRQLTQLLENAKVGEAPAADGAVAPGMVVTIAFDGDEDDTLDFLLASREYASADIETYSPQSPLGSGVNGKKVGEDAQYELPNGKLASVKILKAEPYQG</sequence>
<gene>
    <name evidence="1" type="primary">greA</name>
    <name type="ordered locus">SAV_3301</name>
</gene>
<protein>
    <recommendedName>
        <fullName evidence="1">Transcription elongation factor GreA</fullName>
    </recommendedName>
    <alternativeName>
        <fullName evidence="1">Transcript cleavage factor GreA</fullName>
    </alternativeName>
</protein>
<comment type="function">
    <text evidence="1">Necessary for efficient RNA polymerase transcription elongation past template-encoded arresting sites. The arresting sites in DNA have the property of trapping a certain fraction of elongating RNA polymerases that pass through, resulting in locked ternary complexes. Cleavage of the nascent transcript by cleavage factors such as GreA or GreB allows the resumption of elongation from the new 3'terminus. GreA releases sequences of 2 to 3 nucleotides.</text>
</comment>
<comment type="similarity">
    <text evidence="1">Belongs to the GreA/GreB family.</text>
</comment>
<evidence type="ECO:0000255" key="1">
    <source>
        <dbReference type="HAMAP-Rule" id="MF_00105"/>
    </source>
</evidence>
<reference key="1">
    <citation type="journal article" date="2003" name="Nat. Biotechnol.">
        <title>Complete genome sequence and comparative analysis of the industrial microorganism Streptomyces avermitilis.</title>
        <authorList>
            <person name="Ikeda H."/>
            <person name="Ishikawa J."/>
            <person name="Hanamoto A."/>
            <person name="Shinose M."/>
            <person name="Kikuchi H."/>
            <person name="Shiba T."/>
            <person name="Sakaki Y."/>
            <person name="Hattori M."/>
            <person name="Omura S."/>
        </authorList>
    </citation>
    <scope>NUCLEOTIDE SEQUENCE [LARGE SCALE GENOMIC DNA]</scope>
    <source>
        <strain>ATCC 31267 / DSM 46492 / JCM 5070 / NBRC 14893 / NCIMB 12804 / NRRL 8165 / MA-4680</strain>
    </source>
</reference>
<reference key="2">
    <citation type="journal article" date="2001" name="Proc. Natl. Acad. Sci. U.S.A.">
        <title>Genome sequence of an industrial microorganism Streptomyces avermitilis: deducing the ability of producing secondary metabolites.</title>
        <authorList>
            <person name="Omura S."/>
            <person name="Ikeda H."/>
            <person name="Ishikawa J."/>
            <person name="Hanamoto A."/>
            <person name="Takahashi C."/>
            <person name="Shinose M."/>
            <person name="Takahashi Y."/>
            <person name="Horikawa H."/>
            <person name="Nakazawa H."/>
            <person name="Osonoe T."/>
            <person name="Kikuchi H."/>
            <person name="Shiba T."/>
            <person name="Sakaki Y."/>
            <person name="Hattori M."/>
        </authorList>
    </citation>
    <scope>NUCLEOTIDE SEQUENCE [LARGE SCALE GENOMIC DNA]</scope>
    <source>
        <strain>ATCC 31267 / DSM 46492 / JCM 5070 / NBRC 14893 / NCIMB 12804 / NRRL 8165 / MA-4680</strain>
    </source>
</reference>
<accession>Q82I57</accession>